<name>ATSI_AMACA</name>
<proteinExistence type="evidence at protein level"/>
<dbReference type="PIR" id="S40496">
    <property type="entry name" value="S40496"/>
</dbReference>
<dbReference type="PDB" id="7AL8">
    <property type="method" value="X-ray"/>
    <property type="resolution" value="2.85 A"/>
    <property type="chains" value="C/F/I/L/O/R/V/X=1-69"/>
</dbReference>
<dbReference type="PDBsum" id="7AL8"/>
<dbReference type="SMR" id="P80211"/>
<dbReference type="MEROPS" id="I13.009"/>
<dbReference type="GO" id="GO:0004867">
    <property type="term" value="F:serine-type endopeptidase inhibitor activity"/>
    <property type="evidence" value="ECO:0007669"/>
    <property type="project" value="UniProtKB-KW"/>
</dbReference>
<dbReference type="GO" id="GO:0009611">
    <property type="term" value="P:response to wounding"/>
    <property type="evidence" value="ECO:0007669"/>
    <property type="project" value="InterPro"/>
</dbReference>
<dbReference type="Gene3D" id="3.30.10.10">
    <property type="entry name" value="Trypsin Inhibitor V, subunit A"/>
    <property type="match status" value="1"/>
</dbReference>
<dbReference type="InterPro" id="IPR000864">
    <property type="entry name" value="Prot_inh_pot1"/>
</dbReference>
<dbReference type="InterPro" id="IPR036354">
    <property type="entry name" value="Prot_inh_pot1_sf"/>
</dbReference>
<dbReference type="PANTHER" id="PTHR33091">
    <property type="entry name" value="PROTEIN, PUTATIVE, EXPRESSED-RELATED"/>
    <property type="match status" value="1"/>
</dbReference>
<dbReference type="PANTHER" id="PTHR33091:SF83">
    <property type="entry name" value="SERINE PROTEASE INHIBITOR, POTATO INHIBITOR I-TYPE FAMILY PROTEIN-RELATED"/>
    <property type="match status" value="1"/>
</dbReference>
<dbReference type="Pfam" id="PF00280">
    <property type="entry name" value="potato_inhibit"/>
    <property type="match status" value="1"/>
</dbReference>
<dbReference type="SUPFAM" id="SSF54654">
    <property type="entry name" value="CI-2 family of serine protease inhibitors"/>
    <property type="match status" value="1"/>
</dbReference>
<dbReference type="PROSITE" id="PS00285">
    <property type="entry name" value="POTATO_INHIBITOR"/>
    <property type="match status" value="1"/>
</dbReference>
<keyword id="KW-0002">3D-structure</keyword>
<keyword id="KW-0903">Direct protein sequencing</keyword>
<keyword id="KW-1015">Disulfide bond</keyword>
<keyword id="KW-0646">Protease inhibitor</keyword>
<keyword id="KW-0722">Serine protease inhibitor</keyword>
<accession>P80211</accession>
<reference key="1">
    <citation type="journal article" date="1994" name="Biochim. Biophys. Acta">
        <title>Primary structure and specificity of the major serine proteinase inhibitor of amaranth (Amaranthus caudatus L.) seeds.</title>
        <authorList>
            <person name="Hejgaard J."/>
            <person name="Dam J."/>
            <person name="Pedersen L.C."/>
            <person name="Bjoern S.E."/>
        </authorList>
    </citation>
    <scope>PROTEIN SEQUENCE</scope>
    <source>
        <strain>cv. CAC 064</strain>
        <tissue>Seed</tissue>
    </source>
</reference>
<organism>
    <name type="scientific">Amaranthus caudatus</name>
    <name type="common">Love-lies-bleeding</name>
    <name type="synonym">Inca-wheat</name>
    <dbReference type="NCBI Taxonomy" id="3567"/>
    <lineage>
        <taxon>Eukaryota</taxon>
        <taxon>Viridiplantae</taxon>
        <taxon>Streptophyta</taxon>
        <taxon>Embryophyta</taxon>
        <taxon>Tracheophyta</taxon>
        <taxon>Spermatophyta</taxon>
        <taxon>Magnoliopsida</taxon>
        <taxon>eudicotyledons</taxon>
        <taxon>Gunneridae</taxon>
        <taxon>Pentapetalae</taxon>
        <taxon>Caryophyllales</taxon>
        <taxon>Amaranthaceae</taxon>
        <taxon>Amaranthus</taxon>
    </lineage>
</organism>
<feature type="chain" id="PRO_0000217641" description="Trypsin/subtilisin inhibitor">
    <location>
        <begin position="1"/>
        <end position="69"/>
    </location>
</feature>
<feature type="site" description="Reactive bond" evidence="1">
    <location>
        <begin position="45"/>
        <end position="46"/>
    </location>
</feature>
<feature type="disulfide bond" evidence="1">
    <location>
        <begin position="4"/>
        <end position="49"/>
    </location>
</feature>
<feature type="helix" evidence="3">
    <location>
        <begin position="11"/>
        <end position="13"/>
    </location>
</feature>
<feature type="helix" evidence="3">
    <location>
        <begin position="18"/>
        <end position="28"/>
    </location>
</feature>
<feature type="strand" evidence="3">
    <location>
        <begin position="33"/>
        <end position="38"/>
    </location>
</feature>
<feature type="strand" evidence="3">
    <location>
        <begin position="51"/>
        <end position="56"/>
    </location>
</feature>
<feature type="strand" evidence="3">
    <location>
        <begin position="60"/>
        <end position="62"/>
    </location>
</feature>
<evidence type="ECO:0000250" key="1"/>
<evidence type="ECO:0000305" key="2"/>
<evidence type="ECO:0007829" key="3">
    <source>
        <dbReference type="PDB" id="7AL8"/>
    </source>
</evidence>
<protein>
    <recommendedName>
        <fullName>Trypsin/subtilisin inhibitor</fullName>
    </recommendedName>
    <alternativeName>
        <fullName>ATSI</fullName>
    </alternativeName>
</protein>
<sequence length="69" mass="7889">ARECPGKQEWPELVGEYGYKAAAIIERENPNVRSIVKHERSGFTKDFRCDRVWVVVDSTGVVVRTPRVT</sequence>
<comment type="function">
    <text>Inhibitor of trypsin, chymotrypsin, subtilisin, etc.</text>
</comment>
<comment type="similarity">
    <text evidence="2">Belongs to the protease inhibitor I13 (potato type I serine protease inhibitor) family.</text>
</comment>